<reference key="1">
    <citation type="journal article" date="2011" name="J. Bacteriol.">
        <title>Comparative genomics of 28 Salmonella enterica isolates: evidence for CRISPR-mediated adaptive sublineage evolution.</title>
        <authorList>
            <person name="Fricke W.F."/>
            <person name="Mammel M.K."/>
            <person name="McDermott P.F."/>
            <person name="Tartera C."/>
            <person name="White D.G."/>
            <person name="Leclerc J.E."/>
            <person name="Ravel J."/>
            <person name="Cebula T.A."/>
        </authorList>
    </citation>
    <scope>NUCLEOTIDE SEQUENCE [LARGE SCALE GENOMIC DNA]</scope>
    <source>
        <strain>SL476</strain>
    </source>
</reference>
<protein>
    <recommendedName>
        <fullName evidence="1">DNA repair protein RecO</fullName>
    </recommendedName>
    <alternativeName>
        <fullName evidence="1">Recombination protein O</fullName>
    </alternativeName>
</protein>
<sequence length="242" mass="27472">MEGWQRAFVLHSRPWSETSLMLDVFTEESGRVRLVAKGARSKRSNLKGALQPFTPLLLRYSGRGEVKTLRSAEAVSLALPLSGITLYSGLYINELLSRVLEYETRFSELFFDYLNCIQALAGTTGSPEPALRRFELALLGHLGYGVNFTHCAGSGERVDDTMTYRYREEKGFFASVVIDNNTFTGRHLKALEAREFPDVDTLRAAKRFTRMALKPYLGGKPLKSRELFRQFMPKRTVKTKKD</sequence>
<name>RECO_SALHS</name>
<comment type="function">
    <text evidence="1">Involved in DNA repair and RecF pathway recombination.</text>
</comment>
<comment type="subunit">
    <text evidence="1">Monomer.</text>
</comment>
<comment type="similarity">
    <text evidence="1">Belongs to the RecO family.</text>
</comment>
<proteinExistence type="inferred from homology"/>
<accession>B4TE13</accession>
<feature type="chain" id="PRO_1000099408" description="DNA repair protein RecO">
    <location>
        <begin position="1"/>
        <end position="242"/>
    </location>
</feature>
<evidence type="ECO:0000255" key="1">
    <source>
        <dbReference type="HAMAP-Rule" id="MF_00201"/>
    </source>
</evidence>
<dbReference type="EMBL" id="CP001120">
    <property type="protein sequence ID" value="ACF69924.1"/>
    <property type="molecule type" value="Genomic_DNA"/>
</dbReference>
<dbReference type="RefSeq" id="WP_000399380.1">
    <property type="nucleotide sequence ID" value="NC_011083.1"/>
</dbReference>
<dbReference type="SMR" id="B4TE13"/>
<dbReference type="KEGG" id="seh:SeHA_C2845"/>
<dbReference type="HOGENOM" id="CLU_066645_1_0_6"/>
<dbReference type="Proteomes" id="UP000001866">
    <property type="component" value="Chromosome"/>
</dbReference>
<dbReference type="GO" id="GO:0043590">
    <property type="term" value="C:bacterial nucleoid"/>
    <property type="evidence" value="ECO:0007669"/>
    <property type="project" value="TreeGrafter"/>
</dbReference>
<dbReference type="GO" id="GO:0006310">
    <property type="term" value="P:DNA recombination"/>
    <property type="evidence" value="ECO:0007669"/>
    <property type="project" value="UniProtKB-UniRule"/>
</dbReference>
<dbReference type="GO" id="GO:0006302">
    <property type="term" value="P:double-strand break repair"/>
    <property type="evidence" value="ECO:0007669"/>
    <property type="project" value="TreeGrafter"/>
</dbReference>
<dbReference type="FunFam" id="1.20.1440.120:FF:000001">
    <property type="entry name" value="DNA repair protein RecO"/>
    <property type="match status" value="1"/>
</dbReference>
<dbReference type="FunFam" id="2.40.50.140:FF:000074">
    <property type="entry name" value="DNA repair protein RecO"/>
    <property type="match status" value="1"/>
</dbReference>
<dbReference type="Gene3D" id="2.40.50.140">
    <property type="entry name" value="Nucleic acid-binding proteins"/>
    <property type="match status" value="1"/>
</dbReference>
<dbReference type="Gene3D" id="1.20.1440.120">
    <property type="entry name" value="Recombination protein O, C-terminal domain"/>
    <property type="match status" value="1"/>
</dbReference>
<dbReference type="HAMAP" id="MF_00201">
    <property type="entry name" value="RecO"/>
    <property type="match status" value="1"/>
</dbReference>
<dbReference type="InterPro" id="IPR037278">
    <property type="entry name" value="ARFGAP/RecO"/>
</dbReference>
<dbReference type="InterPro" id="IPR022572">
    <property type="entry name" value="DNA_rep/recomb_RecO_N"/>
</dbReference>
<dbReference type="InterPro" id="IPR012340">
    <property type="entry name" value="NA-bd_OB-fold"/>
</dbReference>
<dbReference type="InterPro" id="IPR003717">
    <property type="entry name" value="RecO"/>
</dbReference>
<dbReference type="InterPro" id="IPR042242">
    <property type="entry name" value="RecO_C"/>
</dbReference>
<dbReference type="NCBIfam" id="TIGR00613">
    <property type="entry name" value="reco"/>
    <property type="match status" value="1"/>
</dbReference>
<dbReference type="PANTHER" id="PTHR33991">
    <property type="entry name" value="DNA REPAIR PROTEIN RECO"/>
    <property type="match status" value="1"/>
</dbReference>
<dbReference type="PANTHER" id="PTHR33991:SF1">
    <property type="entry name" value="DNA REPAIR PROTEIN RECO"/>
    <property type="match status" value="1"/>
</dbReference>
<dbReference type="Pfam" id="PF02565">
    <property type="entry name" value="RecO_C"/>
    <property type="match status" value="1"/>
</dbReference>
<dbReference type="Pfam" id="PF11967">
    <property type="entry name" value="RecO_N"/>
    <property type="match status" value="1"/>
</dbReference>
<dbReference type="SUPFAM" id="SSF57863">
    <property type="entry name" value="ArfGap/RecO-like zinc finger"/>
    <property type="match status" value="1"/>
</dbReference>
<dbReference type="SUPFAM" id="SSF50249">
    <property type="entry name" value="Nucleic acid-binding proteins"/>
    <property type="match status" value="1"/>
</dbReference>
<gene>
    <name evidence="1" type="primary">recO</name>
    <name type="ordered locus">SeHA_C2845</name>
</gene>
<keyword id="KW-0227">DNA damage</keyword>
<keyword id="KW-0233">DNA recombination</keyword>
<keyword id="KW-0234">DNA repair</keyword>
<organism>
    <name type="scientific">Salmonella heidelberg (strain SL476)</name>
    <dbReference type="NCBI Taxonomy" id="454169"/>
    <lineage>
        <taxon>Bacteria</taxon>
        <taxon>Pseudomonadati</taxon>
        <taxon>Pseudomonadota</taxon>
        <taxon>Gammaproteobacteria</taxon>
        <taxon>Enterobacterales</taxon>
        <taxon>Enterobacteriaceae</taxon>
        <taxon>Salmonella</taxon>
    </lineage>
</organism>